<dbReference type="EMBL" id="CP000738">
    <property type="protein sequence ID" value="ABR62090.1"/>
    <property type="molecule type" value="Genomic_DNA"/>
</dbReference>
<dbReference type="RefSeq" id="WP_012067471.1">
    <property type="nucleotide sequence ID" value="NC_009636.1"/>
</dbReference>
<dbReference type="RefSeq" id="YP_001328925.1">
    <property type="nucleotide sequence ID" value="NC_009636.1"/>
</dbReference>
<dbReference type="SMR" id="A6UEL0"/>
<dbReference type="STRING" id="366394.Smed_3266"/>
<dbReference type="GeneID" id="61610848"/>
<dbReference type="KEGG" id="smd:Smed_3266"/>
<dbReference type="PATRIC" id="fig|366394.8.peg.6506"/>
<dbReference type="eggNOG" id="COG1220">
    <property type="taxonomic scope" value="Bacteria"/>
</dbReference>
<dbReference type="HOGENOM" id="CLU_033123_0_0_5"/>
<dbReference type="OrthoDB" id="9804062at2"/>
<dbReference type="Proteomes" id="UP000001108">
    <property type="component" value="Chromosome"/>
</dbReference>
<dbReference type="GO" id="GO:0009376">
    <property type="term" value="C:HslUV protease complex"/>
    <property type="evidence" value="ECO:0007669"/>
    <property type="project" value="UniProtKB-UniRule"/>
</dbReference>
<dbReference type="GO" id="GO:0005524">
    <property type="term" value="F:ATP binding"/>
    <property type="evidence" value="ECO:0007669"/>
    <property type="project" value="UniProtKB-UniRule"/>
</dbReference>
<dbReference type="GO" id="GO:0016887">
    <property type="term" value="F:ATP hydrolysis activity"/>
    <property type="evidence" value="ECO:0007669"/>
    <property type="project" value="InterPro"/>
</dbReference>
<dbReference type="GO" id="GO:0008233">
    <property type="term" value="F:peptidase activity"/>
    <property type="evidence" value="ECO:0007669"/>
    <property type="project" value="InterPro"/>
</dbReference>
<dbReference type="GO" id="GO:0036402">
    <property type="term" value="F:proteasome-activating activity"/>
    <property type="evidence" value="ECO:0007669"/>
    <property type="project" value="UniProtKB-UniRule"/>
</dbReference>
<dbReference type="GO" id="GO:0043335">
    <property type="term" value="P:protein unfolding"/>
    <property type="evidence" value="ECO:0007669"/>
    <property type="project" value="UniProtKB-UniRule"/>
</dbReference>
<dbReference type="GO" id="GO:0051603">
    <property type="term" value="P:proteolysis involved in protein catabolic process"/>
    <property type="evidence" value="ECO:0007669"/>
    <property type="project" value="TreeGrafter"/>
</dbReference>
<dbReference type="CDD" id="cd19498">
    <property type="entry name" value="RecA-like_HslU"/>
    <property type="match status" value="1"/>
</dbReference>
<dbReference type="FunFam" id="3.40.50.300:FF:000213">
    <property type="entry name" value="ATP-dependent protease ATPase subunit HslU"/>
    <property type="match status" value="1"/>
</dbReference>
<dbReference type="FunFam" id="3.40.50.300:FF:000220">
    <property type="entry name" value="ATP-dependent protease ATPase subunit HslU"/>
    <property type="match status" value="1"/>
</dbReference>
<dbReference type="Gene3D" id="1.10.8.60">
    <property type="match status" value="1"/>
</dbReference>
<dbReference type="Gene3D" id="3.40.50.300">
    <property type="entry name" value="P-loop containing nucleotide triphosphate hydrolases"/>
    <property type="match status" value="2"/>
</dbReference>
<dbReference type="HAMAP" id="MF_00249">
    <property type="entry name" value="HslU"/>
    <property type="match status" value="1"/>
</dbReference>
<dbReference type="InterPro" id="IPR003593">
    <property type="entry name" value="AAA+_ATPase"/>
</dbReference>
<dbReference type="InterPro" id="IPR050052">
    <property type="entry name" value="ATP-dep_Clp_protease_ClpX"/>
</dbReference>
<dbReference type="InterPro" id="IPR003959">
    <property type="entry name" value="ATPase_AAA_core"/>
</dbReference>
<dbReference type="InterPro" id="IPR019489">
    <property type="entry name" value="Clp_ATPase_C"/>
</dbReference>
<dbReference type="InterPro" id="IPR004491">
    <property type="entry name" value="HslU"/>
</dbReference>
<dbReference type="InterPro" id="IPR027417">
    <property type="entry name" value="P-loop_NTPase"/>
</dbReference>
<dbReference type="NCBIfam" id="TIGR00390">
    <property type="entry name" value="hslU"/>
    <property type="match status" value="1"/>
</dbReference>
<dbReference type="NCBIfam" id="NF003544">
    <property type="entry name" value="PRK05201.1"/>
    <property type="match status" value="1"/>
</dbReference>
<dbReference type="PANTHER" id="PTHR48102">
    <property type="entry name" value="ATP-DEPENDENT CLP PROTEASE ATP-BINDING SUBUNIT CLPX-LIKE, MITOCHONDRIAL-RELATED"/>
    <property type="match status" value="1"/>
</dbReference>
<dbReference type="PANTHER" id="PTHR48102:SF3">
    <property type="entry name" value="ATP-DEPENDENT PROTEASE ATPASE SUBUNIT HSLU"/>
    <property type="match status" value="1"/>
</dbReference>
<dbReference type="Pfam" id="PF00004">
    <property type="entry name" value="AAA"/>
    <property type="match status" value="1"/>
</dbReference>
<dbReference type="Pfam" id="PF07724">
    <property type="entry name" value="AAA_2"/>
    <property type="match status" value="1"/>
</dbReference>
<dbReference type="Pfam" id="PF10431">
    <property type="entry name" value="ClpB_D2-small"/>
    <property type="match status" value="1"/>
</dbReference>
<dbReference type="SMART" id="SM00382">
    <property type="entry name" value="AAA"/>
    <property type="match status" value="1"/>
</dbReference>
<dbReference type="SMART" id="SM01086">
    <property type="entry name" value="ClpB_D2-small"/>
    <property type="match status" value="1"/>
</dbReference>
<dbReference type="SUPFAM" id="SSF52540">
    <property type="entry name" value="P-loop containing nucleoside triphosphate hydrolases"/>
    <property type="match status" value="1"/>
</dbReference>
<reference key="1">
    <citation type="submission" date="2007-06" db="EMBL/GenBank/DDBJ databases">
        <title>Complete sequence of Sinorhizobium medicae WSM419 chromosome.</title>
        <authorList>
            <consortium name="US DOE Joint Genome Institute"/>
            <person name="Copeland A."/>
            <person name="Lucas S."/>
            <person name="Lapidus A."/>
            <person name="Barry K."/>
            <person name="Glavina del Rio T."/>
            <person name="Dalin E."/>
            <person name="Tice H."/>
            <person name="Pitluck S."/>
            <person name="Chain P."/>
            <person name="Malfatti S."/>
            <person name="Shin M."/>
            <person name="Vergez L."/>
            <person name="Schmutz J."/>
            <person name="Larimer F."/>
            <person name="Land M."/>
            <person name="Hauser L."/>
            <person name="Kyrpides N."/>
            <person name="Mikhailova N."/>
            <person name="Reeve W.G."/>
            <person name="Richardson P."/>
        </authorList>
    </citation>
    <scope>NUCLEOTIDE SEQUENCE [LARGE SCALE GENOMIC DNA]</scope>
    <source>
        <strain>WSM419</strain>
    </source>
</reference>
<keyword id="KW-0067">ATP-binding</keyword>
<keyword id="KW-0143">Chaperone</keyword>
<keyword id="KW-0963">Cytoplasm</keyword>
<keyword id="KW-0547">Nucleotide-binding</keyword>
<keyword id="KW-0346">Stress response</keyword>
<sequence length="435" mass="47809">MSSFSPREIVSELDRYIIGQKDAKRAVAIALRNRWRRQQLSDELRDEVMPKNILMIGPTGVGKTEISRRLAKLAGAPFVKVEATKFTEVGYVGRDVEQIVRDLVEVGISLVREKRRAEVKAKAHQNAEERVLDALVGTTASPATRDSFRKKLRANELDDKEIEVDVAETGNPGGAFEIPGMPGANIGVLNLSEMFGKALGGRTRKIKTTVKDSYALLVNDESDKLLDNEQIQREAVASAENDGIVFLDEIDKIATREGGIGAGVSREGVQRDLLPLVEGTTVATKYGPVKTDHILFIASGAFHVAKPSDLLPELQGRLPIRVELRALTKEDFRRILTETEASLIRQYKALLETEGVTLDFTEDAIDALAEVAVQLNSNVENIGARRLQTVMERVLDDVSFNAPDRGGQGVTIDADYVRVHVGDLAANTDLSRYIL</sequence>
<protein>
    <recommendedName>
        <fullName evidence="1">ATP-dependent protease ATPase subunit HslU</fullName>
    </recommendedName>
    <alternativeName>
        <fullName evidence="1">Unfoldase HslU</fullName>
    </alternativeName>
</protein>
<accession>A6UEL0</accession>
<comment type="function">
    <text evidence="1">ATPase subunit of a proteasome-like degradation complex; this subunit has chaperone activity. The binding of ATP and its subsequent hydrolysis by HslU are essential for unfolding of protein substrates subsequently hydrolyzed by HslV. HslU recognizes the N-terminal part of its protein substrates and unfolds these before they are guided to HslV for hydrolysis.</text>
</comment>
<comment type="subunit">
    <text evidence="1">A double ring-shaped homohexamer of HslV is capped on each side by a ring-shaped HslU homohexamer. The assembly of the HslU/HslV complex is dependent on binding of ATP.</text>
</comment>
<comment type="subcellular location">
    <subcellularLocation>
        <location evidence="1">Cytoplasm</location>
    </subcellularLocation>
</comment>
<comment type="similarity">
    <text evidence="1">Belongs to the ClpX chaperone family. HslU subfamily.</text>
</comment>
<feature type="chain" id="PRO_1000012815" description="ATP-dependent protease ATPase subunit HslU">
    <location>
        <begin position="1"/>
        <end position="435"/>
    </location>
</feature>
<feature type="binding site" evidence="1">
    <location>
        <position position="18"/>
    </location>
    <ligand>
        <name>ATP</name>
        <dbReference type="ChEBI" id="CHEBI:30616"/>
    </ligand>
</feature>
<feature type="binding site" evidence="1">
    <location>
        <begin position="60"/>
        <end position="65"/>
    </location>
    <ligand>
        <name>ATP</name>
        <dbReference type="ChEBI" id="CHEBI:30616"/>
    </ligand>
</feature>
<feature type="binding site" evidence="1">
    <location>
        <position position="248"/>
    </location>
    <ligand>
        <name>ATP</name>
        <dbReference type="ChEBI" id="CHEBI:30616"/>
    </ligand>
</feature>
<feature type="binding site" evidence="1">
    <location>
        <position position="313"/>
    </location>
    <ligand>
        <name>ATP</name>
        <dbReference type="ChEBI" id="CHEBI:30616"/>
    </ligand>
</feature>
<feature type="binding site" evidence="1">
    <location>
        <position position="385"/>
    </location>
    <ligand>
        <name>ATP</name>
        <dbReference type="ChEBI" id="CHEBI:30616"/>
    </ligand>
</feature>
<organism>
    <name type="scientific">Sinorhizobium medicae (strain WSM419)</name>
    <name type="common">Ensifer medicae</name>
    <dbReference type="NCBI Taxonomy" id="366394"/>
    <lineage>
        <taxon>Bacteria</taxon>
        <taxon>Pseudomonadati</taxon>
        <taxon>Pseudomonadota</taxon>
        <taxon>Alphaproteobacteria</taxon>
        <taxon>Hyphomicrobiales</taxon>
        <taxon>Rhizobiaceae</taxon>
        <taxon>Sinorhizobium/Ensifer group</taxon>
        <taxon>Sinorhizobium</taxon>
    </lineage>
</organism>
<gene>
    <name evidence="1" type="primary">hslU</name>
    <name type="ordered locus">Smed_3266</name>
</gene>
<evidence type="ECO:0000255" key="1">
    <source>
        <dbReference type="HAMAP-Rule" id="MF_00249"/>
    </source>
</evidence>
<name>HSLU_SINMW</name>
<proteinExistence type="inferred from homology"/>